<protein>
    <recommendedName>
        <fullName evidence="1">Adenylate kinase</fullName>
        <shortName evidence="1">AK</shortName>
        <ecNumber evidence="1">2.7.4.3</ecNumber>
    </recommendedName>
    <alternativeName>
        <fullName evidence="1">ATP-AMP transphosphorylase</fullName>
    </alternativeName>
    <alternativeName>
        <fullName evidence="1">ATP:AMP phosphotransferase</fullName>
    </alternativeName>
    <alternativeName>
        <fullName evidence="1">Adenylate monophosphate kinase</fullName>
    </alternativeName>
</protein>
<evidence type="ECO:0000255" key="1">
    <source>
        <dbReference type="HAMAP-Rule" id="MF_00235"/>
    </source>
</evidence>
<name>KAD_ACTPJ</name>
<feature type="chain" id="PRO_1000100524" description="Adenylate kinase">
    <location>
        <begin position="1"/>
        <end position="214"/>
    </location>
</feature>
<feature type="region of interest" description="NMP" evidence="1">
    <location>
        <begin position="30"/>
        <end position="59"/>
    </location>
</feature>
<feature type="region of interest" description="LID" evidence="1">
    <location>
        <begin position="122"/>
        <end position="159"/>
    </location>
</feature>
<feature type="binding site" evidence="1">
    <location>
        <begin position="10"/>
        <end position="15"/>
    </location>
    <ligand>
        <name>ATP</name>
        <dbReference type="ChEBI" id="CHEBI:30616"/>
    </ligand>
</feature>
<feature type="binding site" evidence="1">
    <location>
        <position position="31"/>
    </location>
    <ligand>
        <name>AMP</name>
        <dbReference type="ChEBI" id="CHEBI:456215"/>
    </ligand>
</feature>
<feature type="binding site" evidence="1">
    <location>
        <position position="36"/>
    </location>
    <ligand>
        <name>AMP</name>
        <dbReference type="ChEBI" id="CHEBI:456215"/>
    </ligand>
</feature>
<feature type="binding site" evidence="1">
    <location>
        <begin position="57"/>
        <end position="59"/>
    </location>
    <ligand>
        <name>AMP</name>
        <dbReference type="ChEBI" id="CHEBI:456215"/>
    </ligand>
</feature>
<feature type="binding site" evidence="1">
    <location>
        <begin position="85"/>
        <end position="88"/>
    </location>
    <ligand>
        <name>AMP</name>
        <dbReference type="ChEBI" id="CHEBI:456215"/>
    </ligand>
</feature>
<feature type="binding site" evidence="1">
    <location>
        <position position="92"/>
    </location>
    <ligand>
        <name>AMP</name>
        <dbReference type="ChEBI" id="CHEBI:456215"/>
    </ligand>
</feature>
<feature type="binding site" evidence="1">
    <location>
        <position position="123"/>
    </location>
    <ligand>
        <name>ATP</name>
        <dbReference type="ChEBI" id="CHEBI:30616"/>
    </ligand>
</feature>
<feature type="binding site" evidence="1">
    <location>
        <begin position="132"/>
        <end position="133"/>
    </location>
    <ligand>
        <name>ATP</name>
        <dbReference type="ChEBI" id="CHEBI:30616"/>
    </ligand>
</feature>
<feature type="binding site" evidence="1">
    <location>
        <position position="156"/>
    </location>
    <ligand>
        <name>AMP</name>
        <dbReference type="ChEBI" id="CHEBI:456215"/>
    </ligand>
</feature>
<feature type="binding site" evidence="1">
    <location>
        <position position="167"/>
    </location>
    <ligand>
        <name>AMP</name>
        <dbReference type="ChEBI" id="CHEBI:456215"/>
    </ligand>
</feature>
<feature type="binding site" evidence="1">
    <location>
        <position position="200"/>
    </location>
    <ligand>
        <name>ATP</name>
        <dbReference type="ChEBI" id="CHEBI:30616"/>
    </ligand>
</feature>
<accession>B0BQN2</accession>
<comment type="function">
    <text evidence="1">Catalyzes the reversible transfer of the terminal phosphate group between ATP and AMP. Plays an important role in cellular energy homeostasis and in adenine nucleotide metabolism.</text>
</comment>
<comment type="catalytic activity">
    <reaction evidence="1">
        <text>AMP + ATP = 2 ADP</text>
        <dbReference type="Rhea" id="RHEA:12973"/>
        <dbReference type="ChEBI" id="CHEBI:30616"/>
        <dbReference type="ChEBI" id="CHEBI:456215"/>
        <dbReference type="ChEBI" id="CHEBI:456216"/>
        <dbReference type="EC" id="2.7.4.3"/>
    </reaction>
</comment>
<comment type="pathway">
    <text evidence="1">Purine metabolism; AMP biosynthesis via salvage pathway; AMP from ADP: step 1/1.</text>
</comment>
<comment type="subunit">
    <text evidence="1">Monomer.</text>
</comment>
<comment type="subcellular location">
    <subcellularLocation>
        <location evidence="1">Cytoplasm</location>
    </subcellularLocation>
</comment>
<comment type="domain">
    <text evidence="1">Consists of three domains, a large central CORE domain and two small peripheral domains, NMPbind and LID, which undergo movements during catalysis. The LID domain closes over the site of phosphoryl transfer upon ATP binding. Assembling and dissambling the active center during each catalytic cycle provides an effective means to prevent ATP hydrolysis.</text>
</comment>
<comment type="similarity">
    <text evidence="1">Belongs to the adenylate kinase family.</text>
</comment>
<proteinExistence type="inferred from homology"/>
<reference key="1">
    <citation type="journal article" date="2008" name="PLoS ONE">
        <title>Genome biology of Actinobacillus pleuropneumoniae JL03, an isolate of serotype 3 prevalent in China.</title>
        <authorList>
            <person name="Xu Z."/>
            <person name="Zhou Y."/>
            <person name="Li L."/>
            <person name="Zhou R."/>
            <person name="Xiao S."/>
            <person name="Wan Y."/>
            <person name="Zhang S."/>
            <person name="Wang K."/>
            <person name="Li W."/>
            <person name="Li L."/>
            <person name="Jin H."/>
            <person name="Kang M."/>
            <person name="Dalai B."/>
            <person name="Li T."/>
            <person name="Liu L."/>
            <person name="Cheng Y."/>
            <person name="Zhang L."/>
            <person name="Xu T."/>
            <person name="Zheng H."/>
            <person name="Pu S."/>
            <person name="Wang B."/>
            <person name="Gu W."/>
            <person name="Zhang X.L."/>
            <person name="Zhu G.-F."/>
            <person name="Wang S."/>
            <person name="Zhao G.-P."/>
            <person name="Chen H."/>
        </authorList>
    </citation>
    <scope>NUCLEOTIDE SEQUENCE [LARGE SCALE GENOMIC DNA]</scope>
    <source>
        <strain>JL03</strain>
    </source>
</reference>
<gene>
    <name evidence="1" type="primary">adk</name>
    <name type="ordered locus">APJL_1311</name>
</gene>
<sequence>MKIILLGAPGAGKGTQAQFMMNKFGIPQISTGDMFRAAIKEGTELGKQAKALMDEGKLVPDELTVALVKDRIAQPDCANGFLLDGFPRTIPQADALKDSGVKIDLVLEFDVADEVIVERMSGRRVHQPSGRTYHVVYNPPKVEGKDDVTGEDLIIRQDDKPETVLERLAIYHKQTKPLIAYYTAEAEAGNTRYERLDGTKPVEEVSAELAKILG</sequence>
<dbReference type="EC" id="2.7.4.3" evidence="1"/>
<dbReference type="EMBL" id="CP000687">
    <property type="protein sequence ID" value="ABY69867.1"/>
    <property type="molecule type" value="Genomic_DNA"/>
</dbReference>
<dbReference type="RefSeq" id="WP_005598358.1">
    <property type="nucleotide sequence ID" value="NC_010278.1"/>
</dbReference>
<dbReference type="SMR" id="B0BQN2"/>
<dbReference type="GeneID" id="48599543"/>
<dbReference type="KEGG" id="apj:APJL_1311"/>
<dbReference type="HOGENOM" id="CLU_032354_1_2_6"/>
<dbReference type="UniPathway" id="UPA00588">
    <property type="reaction ID" value="UER00649"/>
</dbReference>
<dbReference type="Proteomes" id="UP000008547">
    <property type="component" value="Chromosome"/>
</dbReference>
<dbReference type="GO" id="GO:0005737">
    <property type="term" value="C:cytoplasm"/>
    <property type="evidence" value="ECO:0007669"/>
    <property type="project" value="UniProtKB-SubCell"/>
</dbReference>
<dbReference type="GO" id="GO:0004017">
    <property type="term" value="F:adenylate kinase activity"/>
    <property type="evidence" value="ECO:0007669"/>
    <property type="project" value="UniProtKB-UniRule"/>
</dbReference>
<dbReference type="GO" id="GO:0005524">
    <property type="term" value="F:ATP binding"/>
    <property type="evidence" value="ECO:0007669"/>
    <property type="project" value="UniProtKB-UniRule"/>
</dbReference>
<dbReference type="GO" id="GO:0044209">
    <property type="term" value="P:AMP salvage"/>
    <property type="evidence" value="ECO:0007669"/>
    <property type="project" value="UniProtKB-UniRule"/>
</dbReference>
<dbReference type="CDD" id="cd01428">
    <property type="entry name" value="ADK"/>
    <property type="match status" value="1"/>
</dbReference>
<dbReference type="FunFam" id="3.40.50.300:FF:000106">
    <property type="entry name" value="Adenylate kinase mitochondrial"/>
    <property type="match status" value="1"/>
</dbReference>
<dbReference type="Gene3D" id="3.40.50.300">
    <property type="entry name" value="P-loop containing nucleotide triphosphate hydrolases"/>
    <property type="match status" value="1"/>
</dbReference>
<dbReference type="HAMAP" id="MF_00235">
    <property type="entry name" value="Adenylate_kinase_Adk"/>
    <property type="match status" value="1"/>
</dbReference>
<dbReference type="InterPro" id="IPR006259">
    <property type="entry name" value="Adenyl_kin_sub"/>
</dbReference>
<dbReference type="InterPro" id="IPR000850">
    <property type="entry name" value="Adenylat/UMP-CMP_kin"/>
</dbReference>
<dbReference type="InterPro" id="IPR033690">
    <property type="entry name" value="Adenylat_kinase_CS"/>
</dbReference>
<dbReference type="InterPro" id="IPR007862">
    <property type="entry name" value="Adenylate_kinase_lid-dom"/>
</dbReference>
<dbReference type="InterPro" id="IPR027417">
    <property type="entry name" value="P-loop_NTPase"/>
</dbReference>
<dbReference type="NCBIfam" id="TIGR01351">
    <property type="entry name" value="adk"/>
    <property type="match status" value="1"/>
</dbReference>
<dbReference type="NCBIfam" id="NF001379">
    <property type="entry name" value="PRK00279.1-1"/>
    <property type="match status" value="1"/>
</dbReference>
<dbReference type="NCBIfam" id="NF001380">
    <property type="entry name" value="PRK00279.1-2"/>
    <property type="match status" value="1"/>
</dbReference>
<dbReference type="NCBIfam" id="NF001381">
    <property type="entry name" value="PRK00279.1-3"/>
    <property type="match status" value="1"/>
</dbReference>
<dbReference type="PANTHER" id="PTHR23359">
    <property type="entry name" value="NUCLEOTIDE KINASE"/>
    <property type="match status" value="1"/>
</dbReference>
<dbReference type="Pfam" id="PF00406">
    <property type="entry name" value="ADK"/>
    <property type="match status" value="1"/>
</dbReference>
<dbReference type="Pfam" id="PF05191">
    <property type="entry name" value="ADK_lid"/>
    <property type="match status" value="1"/>
</dbReference>
<dbReference type="PRINTS" id="PR00094">
    <property type="entry name" value="ADENYLTKNASE"/>
</dbReference>
<dbReference type="SUPFAM" id="SSF52540">
    <property type="entry name" value="P-loop containing nucleoside triphosphate hydrolases"/>
    <property type="match status" value="1"/>
</dbReference>
<dbReference type="PROSITE" id="PS00113">
    <property type="entry name" value="ADENYLATE_KINASE"/>
    <property type="match status" value="1"/>
</dbReference>
<organism>
    <name type="scientific">Actinobacillus pleuropneumoniae serotype 3 (strain JL03)</name>
    <dbReference type="NCBI Taxonomy" id="434271"/>
    <lineage>
        <taxon>Bacteria</taxon>
        <taxon>Pseudomonadati</taxon>
        <taxon>Pseudomonadota</taxon>
        <taxon>Gammaproteobacteria</taxon>
        <taxon>Pasteurellales</taxon>
        <taxon>Pasteurellaceae</taxon>
        <taxon>Actinobacillus</taxon>
    </lineage>
</organism>
<keyword id="KW-0067">ATP-binding</keyword>
<keyword id="KW-0963">Cytoplasm</keyword>
<keyword id="KW-0418">Kinase</keyword>
<keyword id="KW-0545">Nucleotide biosynthesis</keyword>
<keyword id="KW-0547">Nucleotide-binding</keyword>
<keyword id="KW-0808">Transferase</keyword>